<sequence>MAIRKMKPITNGTRHMSRLVNDELDKVRPEKSLTVPLKSAYGRDNYGHRTCRDRQKGHKRLYRIIDFKRNKLDVPARVATIEYDPNRSANIALLFYVDGEKRYILAPKGLKKGDIVSAGSKAEIKPGNALKLKDMPVGVQIHNIELQRGKGGQLVRSAGTAARLVAKEGTYCHVELPSGELRLIHGECMATVGEVGNSEHNLVNIGKAGRARHMGKRPHVRGAVMNPVDHPHGGGEGKNSVGRKSPLTPWGKPALGIKTRGRKTSDKFIVRRRNEK</sequence>
<name>RL2_FUSNN</name>
<gene>
    <name evidence="1" type="primary">rplB</name>
    <name type="ordered locus">FN1642</name>
</gene>
<feature type="chain" id="PRO_0000129563" description="Large ribosomal subunit protein uL2">
    <location>
        <begin position="1"/>
        <end position="276"/>
    </location>
</feature>
<feature type="region of interest" description="Disordered" evidence="2">
    <location>
        <begin position="223"/>
        <end position="276"/>
    </location>
</feature>
<feature type="compositionally biased region" description="Basic and acidic residues" evidence="2">
    <location>
        <begin position="263"/>
        <end position="276"/>
    </location>
</feature>
<reference key="1">
    <citation type="journal article" date="2002" name="J. Bacteriol.">
        <title>Genome sequence and analysis of the oral bacterium Fusobacterium nucleatum strain ATCC 25586.</title>
        <authorList>
            <person name="Kapatral V."/>
            <person name="Anderson I."/>
            <person name="Ivanova N."/>
            <person name="Reznik G."/>
            <person name="Los T."/>
            <person name="Lykidis A."/>
            <person name="Bhattacharyya A."/>
            <person name="Bartman A."/>
            <person name="Gardner W."/>
            <person name="Grechkin G."/>
            <person name="Zhu L."/>
            <person name="Vasieva O."/>
            <person name="Chu L."/>
            <person name="Kogan Y."/>
            <person name="Chaga O."/>
            <person name="Goltsman E."/>
            <person name="Bernal A."/>
            <person name="Larsen N."/>
            <person name="D'Souza M."/>
            <person name="Walunas T."/>
            <person name="Pusch G."/>
            <person name="Haselkorn R."/>
            <person name="Fonstein M."/>
            <person name="Kyrpides N.C."/>
            <person name="Overbeek R."/>
        </authorList>
    </citation>
    <scope>NUCLEOTIDE SEQUENCE [LARGE SCALE GENOMIC DNA]</scope>
    <source>
        <strain>ATCC 25586 / DSM 15643 / BCRC 10681 / CIP 101130 / JCM 8532 / KCTC 2640 / LMG 13131 / VPI 4355</strain>
    </source>
</reference>
<proteinExistence type="inferred from homology"/>
<keyword id="KW-1185">Reference proteome</keyword>
<keyword id="KW-0687">Ribonucleoprotein</keyword>
<keyword id="KW-0689">Ribosomal protein</keyword>
<keyword id="KW-0694">RNA-binding</keyword>
<keyword id="KW-0699">rRNA-binding</keyword>
<protein>
    <recommendedName>
        <fullName evidence="1">Large ribosomal subunit protein uL2</fullName>
    </recommendedName>
    <alternativeName>
        <fullName evidence="3">50S ribosomal protein L2</fullName>
    </alternativeName>
</protein>
<organism>
    <name type="scientific">Fusobacterium nucleatum subsp. nucleatum (strain ATCC 25586 / DSM 15643 / BCRC 10681 / CIP 101130 / JCM 8532 / KCTC 2640 / LMG 13131 / VPI 4355)</name>
    <dbReference type="NCBI Taxonomy" id="190304"/>
    <lineage>
        <taxon>Bacteria</taxon>
        <taxon>Fusobacteriati</taxon>
        <taxon>Fusobacteriota</taxon>
        <taxon>Fusobacteriia</taxon>
        <taxon>Fusobacteriales</taxon>
        <taxon>Fusobacteriaceae</taxon>
        <taxon>Fusobacterium</taxon>
    </lineage>
</organism>
<accession>Q8RIF8</accession>
<comment type="function">
    <text evidence="1">One of the primary rRNA binding proteins. Required for association of the 30S and 50S subunits to form the 70S ribosome, for tRNA binding and peptide bond formation. It has been suggested to have peptidyltransferase activity; this is somewhat controversial. Makes several contacts with the 16S rRNA in the 70S ribosome.</text>
</comment>
<comment type="subunit">
    <text evidence="1">Part of the 50S ribosomal subunit. Forms a bridge to the 30S subunit in the 70S ribosome.</text>
</comment>
<comment type="similarity">
    <text evidence="1">Belongs to the universal ribosomal protein uL2 family.</text>
</comment>
<dbReference type="EMBL" id="AE009951">
    <property type="protein sequence ID" value="AAL93757.1"/>
    <property type="molecule type" value="Genomic_DNA"/>
</dbReference>
<dbReference type="RefSeq" id="NP_602458.1">
    <property type="nucleotide sequence ID" value="NC_003454.1"/>
</dbReference>
<dbReference type="RefSeq" id="WP_005904139.1">
    <property type="nucleotide sequence ID" value="NZ_OZ209243.1"/>
</dbReference>
<dbReference type="SMR" id="Q8RIF8"/>
<dbReference type="FunCoup" id="Q8RIF8">
    <property type="interactions" value="348"/>
</dbReference>
<dbReference type="STRING" id="190304.FN1642"/>
<dbReference type="PaxDb" id="190304-FN1642"/>
<dbReference type="EnsemblBacteria" id="AAL93757">
    <property type="protein sequence ID" value="AAL93757"/>
    <property type="gene ID" value="FN1642"/>
</dbReference>
<dbReference type="GeneID" id="79782580"/>
<dbReference type="KEGG" id="fnu:FN1642"/>
<dbReference type="PATRIC" id="fig|190304.8.peg.135"/>
<dbReference type="eggNOG" id="COG0090">
    <property type="taxonomic scope" value="Bacteria"/>
</dbReference>
<dbReference type="HOGENOM" id="CLU_036235_2_1_0"/>
<dbReference type="InParanoid" id="Q8RIF8"/>
<dbReference type="BioCyc" id="FNUC190304:G1FZS-145-MONOMER"/>
<dbReference type="Proteomes" id="UP000002521">
    <property type="component" value="Chromosome"/>
</dbReference>
<dbReference type="GO" id="GO:0015934">
    <property type="term" value="C:large ribosomal subunit"/>
    <property type="evidence" value="ECO:0007669"/>
    <property type="project" value="InterPro"/>
</dbReference>
<dbReference type="GO" id="GO:0003723">
    <property type="term" value="F:RNA binding"/>
    <property type="evidence" value="ECO:0000318"/>
    <property type="project" value="GO_Central"/>
</dbReference>
<dbReference type="GO" id="GO:0019843">
    <property type="term" value="F:rRNA binding"/>
    <property type="evidence" value="ECO:0007669"/>
    <property type="project" value="UniProtKB-UniRule"/>
</dbReference>
<dbReference type="GO" id="GO:0003735">
    <property type="term" value="F:structural constituent of ribosome"/>
    <property type="evidence" value="ECO:0000318"/>
    <property type="project" value="GO_Central"/>
</dbReference>
<dbReference type="GO" id="GO:0016740">
    <property type="term" value="F:transferase activity"/>
    <property type="evidence" value="ECO:0007669"/>
    <property type="project" value="InterPro"/>
</dbReference>
<dbReference type="GO" id="GO:0002181">
    <property type="term" value="P:cytoplasmic translation"/>
    <property type="evidence" value="ECO:0000318"/>
    <property type="project" value="GO_Central"/>
</dbReference>
<dbReference type="FunFam" id="2.30.30.30:FF:000085">
    <property type="entry name" value="50S ribosomal protein L2"/>
    <property type="match status" value="1"/>
</dbReference>
<dbReference type="FunFam" id="2.40.50.140:FF:000003">
    <property type="entry name" value="50S ribosomal protein L2"/>
    <property type="match status" value="1"/>
</dbReference>
<dbReference type="FunFam" id="4.10.950.10:FF:000001">
    <property type="entry name" value="50S ribosomal protein L2"/>
    <property type="match status" value="1"/>
</dbReference>
<dbReference type="Gene3D" id="2.30.30.30">
    <property type="match status" value="1"/>
</dbReference>
<dbReference type="Gene3D" id="2.40.50.140">
    <property type="entry name" value="Nucleic acid-binding proteins"/>
    <property type="match status" value="1"/>
</dbReference>
<dbReference type="Gene3D" id="4.10.950.10">
    <property type="entry name" value="Ribosomal protein L2, domain 3"/>
    <property type="match status" value="1"/>
</dbReference>
<dbReference type="HAMAP" id="MF_01320_B">
    <property type="entry name" value="Ribosomal_uL2_B"/>
    <property type="match status" value="1"/>
</dbReference>
<dbReference type="InterPro" id="IPR012340">
    <property type="entry name" value="NA-bd_OB-fold"/>
</dbReference>
<dbReference type="InterPro" id="IPR014722">
    <property type="entry name" value="Rib_uL2_dom2"/>
</dbReference>
<dbReference type="InterPro" id="IPR002171">
    <property type="entry name" value="Ribosomal_uL2"/>
</dbReference>
<dbReference type="InterPro" id="IPR005880">
    <property type="entry name" value="Ribosomal_uL2_bac/org-type"/>
</dbReference>
<dbReference type="InterPro" id="IPR022669">
    <property type="entry name" value="Ribosomal_uL2_C"/>
</dbReference>
<dbReference type="InterPro" id="IPR022671">
    <property type="entry name" value="Ribosomal_uL2_CS"/>
</dbReference>
<dbReference type="InterPro" id="IPR014726">
    <property type="entry name" value="Ribosomal_uL2_dom3"/>
</dbReference>
<dbReference type="InterPro" id="IPR022666">
    <property type="entry name" value="Ribosomal_uL2_RNA-bd_dom"/>
</dbReference>
<dbReference type="InterPro" id="IPR008991">
    <property type="entry name" value="Translation_prot_SH3-like_sf"/>
</dbReference>
<dbReference type="NCBIfam" id="TIGR01171">
    <property type="entry name" value="rplB_bact"/>
    <property type="match status" value="1"/>
</dbReference>
<dbReference type="PANTHER" id="PTHR13691:SF5">
    <property type="entry name" value="LARGE RIBOSOMAL SUBUNIT PROTEIN UL2M"/>
    <property type="match status" value="1"/>
</dbReference>
<dbReference type="PANTHER" id="PTHR13691">
    <property type="entry name" value="RIBOSOMAL PROTEIN L2"/>
    <property type="match status" value="1"/>
</dbReference>
<dbReference type="Pfam" id="PF00181">
    <property type="entry name" value="Ribosomal_L2"/>
    <property type="match status" value="1"/>
</dbReference>
<dbReference type="Pfam" id="PF03947">
    <property type="entry name" value="Ribosomal_L2_C"/>
    <property type="match status" value="1"/>
</dbReference>
<dbReference type="PIRSF" id="PIRSF002158">
    <property type="entry name" value="Ribosomal_L2"/>
    <property type="match status" value="1"/>
</dbReference>
<dbReference type="SMART" id="SM01383">
    <property type="entry name" value="Ribosomal_L2"/>
    <property type="match status" value="1"/>
</dbReference>
<dbReference type="SMART" id="SM01382">
    <property type="entry name" value="Ribosomal_L2_C"/>
    <property type="match status" value="1"/>
</dbReference>
<dbReference type="SUPFAM" id="SSF50249">
    <property type="entry name" value="Nucleic acid-binding proteins"/>
    <property type="match status" value="1"/>
</dbReference>
<dbReference type="SUPFAM" id="SSF50104">
    <property type="entry name" value="Translation proteins SH3-like domain"/>
    <property type="match status" value="1"/>
</dbReference>
<dbReference type="PROSITE" id="PS00467">
    <property type="entry name" value="RIBOSOMAL_L2"/>
    <property type="match status" value="1"/>
</dbReference>
<evidence type="ECO:0000255" key="1">
    <source>
        <dbReference type="HAMAP-Rule" id="MF_01320"/>
    </source>
</evidence>
<evidence type="ECO:0000256" key="2">
    <source>
        <dbReference type="SAM" id="MobiDB-lite"/>
    </source>
</evidence>
<evidence type="ECO:0000305" key="3"/>